<proteinExistence type="inferred from homology"/>
<reference key="1">
    <citation type="journal article" date="2007" name="Proc. Natl. Acad. Sci. U.S.A.">
        <title>Genomic and metabolic adaptations of Methanobrevibacter smithii to the human gut.</title>
        <authorList>
            <person name="Samuel B.S."/>
            <person name="Hansen E.E."/>
            <person name="Manchester J.K."/>
            <person name="Coutinho P.M."/>
            <person name="Henrissat B."/>
            <person name="Fulton R."/>
            <person name="Latreille P."/>
            <person name="Kim K."/>
            <person name="Wilson R.K."/>
            <person name="Gordon J.I."/>
        </authorList>
    </citation>
    <scope>NUCLEOTIDE SEQUENCE [LARGE SCALE GENOMIC DNA]</scope>
    <source>
        <strain>ATCC 35061 / DSM 861 / OCM 144 / PS</strain>
    </source>
</reference>
<feature type="chain" id="PRO_0000300235" description="GMP synthase [glutamine-hydrolyzing] subunit A">
    <location>
        <begin position="1"/>
        <end position="190"/>
    </location>
</feature>
<feature type="domain" description="Glutamine amidotransferase type-1" evidence="1">
    <location>
        <begin position="2"/>
        <end position="189"/>
    </location>
</feature>
<feature type="active site" description="Nucleophile" evidence="1">
    <location>
        <position position="76"/>
    </location>
</feature>
<feature type="active site" evidence="1">
    <location>
        <position position="163"/>
    </location>
</feature>
<feature type="active site" evidence="1">
    <location>
        <position position="165"/>
    </location>
</feature>
<keyword id="KW-0067">ATP-binding</keyword>
<keyword id="KW-0315">Glutamine amidotransferase</keyword>
<keyword id="KW-0332">GMP biosynthesis</keyword>
<keyword id="KW-0436">Ligase</keyword>
<keyword id="KW-0547">Nucleotide-binding</keyword>
<keyword id="KW-0658">Purine biosynthesis</keyword>
<name>GUAAA_METS3</name>
<protein>
    <recommendedName>
        <fullName evidence="1">GMP synthase [glutamine-hydrolyzing] subunit A</fullName>
        <ecNumber evidence="1">6.3.5.2</ecNumber>
    </recommendedName>
    <alternativeName>
        <fullName evidence="1">Glutamine amidotransferase</fullName>
    </alternativeName>
</protein>
<comment type="function">
    <text evidence="1">Catalyzes the synthesis of GMP from XMP.</text>
</comment>
<comment type="catalytic activity">
    <reaction evidence="1">
        <text>XMP + L-glutamine + ATP + H2O = GMP + L-glutamate + AMP + diphosphate + 2 H(+)</text>
        <dbReference type="Rhea" id="RHEA:11680"/>
        <dbReference type="ChEBI" id="CHEBI:15377"/>
        <dbReference type="ChEBI" id="CHEBI:15378"/>
        <dbReference type="ChEBI" id="CHEBI:29985"/>
        <dbReference type="ChEBI" id="CHEBI:30616"/>
        <dbReference type="ChEBI" id="CHEBI:33019"/>
        <dbReference type="ChEBI" id="CHEBI:57464"/>
        <dbReference type="ChEBI" id="CHEBI:58115"/>
        <dbReference type="ChEBI" id="CHEBI:58359"/>
        <dbReference type="ChEBI" id="CHEBI:456215"/>
        <dbReference type="EC" id="6.3.5.2"/>
    </reaction>
</comment>
<comment type="pathway">
    <text evidence="1">Purine metabolism; GMP biosynthesis; GMP from XMP (L-Gln route): step 1/1.</text>
</comment>
<comment type="subunit">
    <text evidence="1">Heterodimer composed of a glutamine amidotransferase subunit (A) and a GMP-binding subunit (B).</text>
</comment>
<organism>
    <name type="scientific">Methanobrevibacter smithii (strain ATCC 35061 / DSM 861 / OCM 144 / PS)</name>
    <dbReference type="NCBI Taxonomy" id="420247"/>
    <lineage>
        <taxon>Archaea</taxon>
        <taxon>Methanobacteriati</taxon>
        <taxon>Methanobacteriota</taxon>
        <taxon>Methanomada group</taxon>
        <taxon>Methanobacteria</taxon>
        <taxon>Methanobacteriales</taxon>
        <taxon>Methanobacteriaceae</taxon>
        <taxon>Methanobrevibacter</taxon>
    </lineage>
</organism>
<sequence length="190" mass="21329">MTILVINNKGQYNHRIQRSLQYLKIPTELVPNTLSIEEIEAKNPIGLILGGGPSIEGAGNSEEYIKHFDIPILGICLGHQLIAKAYGGQIDTSNTESYAKVEINIVNDENLFSGLAPKMEVWSSHKDEVKSIPDDFEILANSNLCDVESFKHTEKDVYGIQFHPEVHHTPKGSTIFENFYEICKKRCNND</sequence>
<accession>A5UK20</accession>
<gene>
    <name evidence="1" type="primary">guaAA</name>
    <name type="ordered locus">Msm_0343</name>
</gene>
<evidence type="ECO:0000255" key="1">
    <source>
        <dbReference type="HAMAP-Rule" id="MF_01510"/>
    </source>
</evidence>
<dbReference type="EC" id="6.3.5.2" evidence="1"/>
<dbReference type="EMBL" id="CP000678">
    <property type="protein sequence ID" value="ABQ86548.1"/>
    <property type="molecule type" value="Genomic_DNA"/>
</dbReference>
<dbReference type="RefSeq" id="WP_004034560.1">
    <property type="nucleotide sequence ID" value="NZ_CP117965.1"/>
</dbReference>
<dbReference type="SMR" id="A5UK20"/>
<dbReference type="STRING" id="420247.Msm_0343"/>
<dbReference type="EnsemblBacteria" id="ABQ86548">
    <property type="protein sequence ID" value="ABQ86548"/>
    <property type="gene ID" value="Msm_0343"/>
</dbReference>
<dbReference type="KEGG" id="msi:Msm_0343"/>
<dbReference type="PATRIC" id="fig|420247.28.peg.345"/>
<dbReference type="eggNOG" id="arCOG00087">
    <property type="taxonomic scope" value="Archaea"/>
</dbReference>
<dbReference type="HOGENOM" id="CLU_014340_1_4_2"/>
<dbReference type="UniPathway" id="UPA00189">
    <property type="reaction ID" value="UER00296"/>
</dbReference>
<dbReference type="Proteomes" id="UP000001992">
    <property type="component" value="Chromosome"/>
</dbReference>
<dbReference type="GO" id="GO:0005829">
    <property type="term" value="C:cytosol"/>
    <property type="evidence" value="ECO:0007669"/>
    <property type="project" value="TreeGrafter"/>
</dbReference>
<dbReference type="GO" id="GO:0005524">
    <property type="term" value="F:ATP binding"/>
    <property type="evidence" value="ECO:0007669"/>
    <property type="project" value="UniProtKB-KW"/>
</dbReference>
<dbReference type="GO" id="GO:0003921">
    <property type="term" value="F:GMP synthase activity"/>
    <property type="evidence" value="ECO:0007669"/>
    <property type="project" value="TreeGrafter"/>
</dbReference>
<dbReference type="CDD" id="cd01742">
    <property type="entry name" value="GATase1_GMP_Synthase"/>
    <property type="match status" value="1"/>
</dbReference>
<dbReference type="FunFam" id="3.40.50.880:FF:000047">
    <property type="entry name" value="GMP synthase [glutamine-hydrolyzing] subunit A"/>
    <property type="match status" value="1"/>
</dbReference>
<dbReference type="Gene3D" id="3.40.50.880">
    <property type="match status" value="1"/>
</dbReference>
<dbReference type="HAMAP" id="MF_01510">
    <property type="entry name" value="GMP_synthase_A"/>
    <property type="match status" value="1"/>
</dbReference>
<dbReference type="InterPro" id="IPR029062">
    <property type="entry name" value="Class_I_gatase-like"/>
</dbReference>
<dbReference type="InterPro" id="IPR017926">
    <property type="entry name" value="GATASE"/>
</dbReference>
<dbReference type="InterPro" id="IPR004739">
    <property type="entry name" value="GMP_synth_GATase"/>
</dbReference>
<dbReference type="InterPro" id="IPR023686">
    <property type="entry name" value="GMP_synthase_A"/>
</dbReference>
<dbReference type="NCBIfam" id="TIGR00888">
    <property type="entry name" value="guaA_Nterm"/>
    <property type="match status" value="1"/>
</dbReference>
<dbReference type="NCBIfam" id="NF001975">
    <property type="entry name" value="PRK00758.1"/>
    <property type="match status" value="1"/>
</dbReference>
<dbReference type="PANTHER" id="PTHR11922:SF2">
    <property type="entry name" value="GMP SYNTHASE [GLUTAMINE-HYDROLYZING]"/>
    <property type="match status" value="1"/>
</dbReference>
<dbReference type="PANTHER" id="PTHR11922">
    <property type="entry name" value="GMP SYNTHASE-RELATED"/>
    <property type="match status" value="1"/>
</dbReference>
<dbReference type="Pfam" id="PF00117">
    <property type="entry name" value="GATase"/>
    <property type="match status" value="1"/>
</dbReference>
<dbReference type="PRINTS" id="PR00097">
    <property type="entry name" value="ANTSNTHASEII"/>
</dbReference>
<dbReference type="PRINTS" id="PR00096">
    <property type="entry name" value="GATASE"/>
</dbReference>
<dbReference type="SUPFAM" id="SSF52317">
    <property type="entry name" value="Class I glutamine amidotransferase-like"/>
    <property type="match status" value="1"/>
</dbReference>
<dbReference type="PROSITE" id="PS51273">
    <property type="entry name" value="GATASE_TYPE_1"/>
    <property type="match status" value="1"/>
</dbReference>